<reference key="1">
    <citation type="journal article" date="2009" name="PLoS Genet.">
        <title>Organised genome dynamics in the Escherichia coli species results in highly diverse adaptive paths.</title>
        <authorList>
            <person name="Touchon M."/>
            <person name="Hoede C."/>
            <person name="Tenaillon O."/>
            <person name="Barbe V."/>
            <person name="Baeriswyl S."/>
            <person name="Bidet P."/>
            <person name="Bingen E."/>
            <person name="Bonacorsi S."/>
            <person name="Bouchier C."/>
            <person name="Bouvet O."/>
            <person name="Calteau A."/>
            <person name="Chiapello H."/>
            <person name="Clermont O."/>
            <person name="Cruveiller S."/>
            <person name="Danchin A."/>
            <person name="Diard M."/>
            <person name="Dossat C."/>
            <person name="Karoui M.E."/>
            <person name="Frapy E."/>
            <person name="Garry L."/>
            <person name="Ghigo J.M."/>
            <person name="Gilles A.M."/>
            <person name="Johnson J."/>
            <person name="Le Bouguenec C."/>
            <person name="Lescat M."/>
            <person name="Mangenot S."/>
            <person name="Martinez-Jehanne V."/>
            <person name="Matic I."/>
            <person name="Nassif X."/>
            <person name="Oztas S."/>
            <person name="Petit M.A."/>
            <person name="Pichon C."/>
            <person name="Rouy Z."/>
            <person name="Ruf C.S."/>
            <person name="Schneider D."/>
            <person name="Tourret J."/>
            <person name="Vacherie B."/>
            <person name="Vallenet D."/>
            <person name="Medigue C."/>
            <person name="Rocha E.P.C."/>
            <person name="Denamur E."/>
        </authorList>
    </citation>
    <scope>NUCLEOTIDE SEQUENCE [LARGE SCALE GENOMIC DNA]</scope>
    <source>
        <strain>UMN026 / ExPEC</strain>
    </source>
</reference>
<organism>
    <name type="scientific">Escherichia coli O17:K52:H18 (strain UMN026 / ExPEC)</name>
    <dbReference type="NCBI Taxonomy" id="585056"/>
    <lineage>
        <taxon>Bacteria</taxon>
        <taxon>Pseudomonadati</taxon>
        <taxon>Pseudomonadota</taxon>
        <taxon>Gammaproteobacteria</taxon>
        <taxon>Enterobacterales</taxon>
        <taxon>Enterobacteriaceae</taxon>
        <taxon>Escherichia</taxon>
    </lineage>
</organism>
<proteinExistence type="inferred from homology"/>
<keyword id="KW-0001">2Fe-2S</keyword>
<keyword id="KW-0963">Cytoplasm</keyword>
<keyword id="KW-0408">Iron</keyword>
<keyword id="KW-0411">Iron-sulfur</keyword>
<keyword id="KW-0479">Metal-binding</keyword>
<keyword id="KW-0560">Oxidoreductase</keyword>
<dbReference type="EC" id="1.7.99.1" evidence="1"/>
<dbReference type="EMBL" id="CU928163">
    <property type="protein sequence ID" value="CAR12277.1"/>
    <property type="molecule type" value="Genomic_DNA"/>
</dbReference>
<dbReference type="RefSeq" id="WP_000458817.1">
    <property type="nucleotide sequence ID" value="NC_011751.1"/>
</dbReference>
<dbReference type="RefSeq" id="YP_002411821.1">
    <property type="nucleotide sequence ID" value="NC_011751.1"/>
</dbReference>
<dbReference type="SMR" id="B7NAM4"/>
<dbReference type="STRING" id="585056.ECUMN_1068"/>
<dbReference type="GeneID" id="75202475"/>
<dbReference type="KEGG" id="eum:ECUMN_1068"/>
<dbReference type="PATRIC" id="fig|585056.7.peg.1261"/>
<dbReference type="HOGENOM" id="CLU_038344_2_0_6"/>
<dbReference type="Proteomes" id="UP000007097">
    <property type="component" value="Chromosome"/>
</dbReference>
<dbReference type="GO" id="GO:0005737">
    <property type="term" value="C:cytoplasm"/>
    <property type="evidence" value="ECO:0007669"/>
    <property type="project" value="UniProtKB-SubCell"/>
</dbReference>
<dbReference type="GO" id="GO:0051537">
    <property type="term" value="F:2 iron, 2 sulfur cluster binding"/>
    <property type="evidence" value="ECO:0007669"/>
    <property type="project" value="UniProtKB-KW"/>
</dbReference>
<dbReference type="GO" id="GO:0050418">
    <property type="term" value="F:hydroxylamine reductase activity"/>
    <property type="evidence" value="ECO:0007669"/>
    <property type="project" value="UniProtKB-UniRule"/>
</dbReference>
<dbReference type="GO" id="GO:0046872">
    <property type="term" value="F:metal ion binding"/>
    <property type="evidence" value="ECO:0007669"/>
    <property type="project" value="UniProtKB-KW"/>
</dbReference>
<dbReference type="GO" id="GO:0004601">
    <property type="term" value="F:peroxidase activity"/>
    <property type="evidence" value="ECO:0007669"/>
    <property type="project" value="TreeGrafter"/>
</dbReference>
<dbReference type="GO" id="GO:0042542">
    <property type="term" value="P:response to hydrogen peroxide"/>
    <property type="evidence" value="ECO:0007669"/>
    <property type="project" value="TreeGrafter"/>
</dbReference>
<dbReference type="CDD" id="cd01914">
    <property type="entry name" value="HCP"/>
    <property type="match status" value="1"/>
</dbReference>
<dbReference type="FunFam" id="1.20.1270.20:FF:000001">
    <property type="entry name" value="Hydroxylamine reductase"/>
    <property type="match status" value="1"/>
</dbReference>
<dbReference type="FunFam" id="1.20.1270.20:FF:000002">
    <property type="entry name" value="Hydroxylamine reductase"/>
    <property type="match status" value="1"/>
</dbReference>
<dbReference type="FunFam" id="3.40.50.2030:FF:000001">
    <property type="entry name" value="Hydroxylamine reductase"/>
    <property type="match status" value="1"/>
</dbReference>
<dbReference type="FunFam" id="3.40.50.2030:FF:000002">
    <property type="entry name" value="Hydroxylamine reductase"/>
    <property type="match status" value="1"/>
</dbReference>
<dbReference type="Gene3D" id="1.20.1270.20">
    <property type="match status" value="2"/>
</dbReference>
<dbReference type="Gene3D" id="3.40.50.2030">
    <property type="match status" value="2"/>
</dbReference>
<dbReference type="HAMAP" id="MF_00069">
    <property type="entry name" value="Hydroxylam_reduct"/>
    <property type="match status" value="1"/>
</dbReference>
<dbReference type="InterPro" id="IPR004137">
    <property type="entry name" value="HCP/CODH"/>
</dbReference>
<dbReference type="InterPro" id="IPR010048">
    <property type="entry name" value="Hydroxylam_reduct"/>
</dbReference>
<dbReference type="InterPro" id="IPR016099">
    <property type="entry name" value="Prismane-like_a/b-sand"/>
</dbReference>
<dbReference type="InterPro" id="IPR011254">
    <property type="entry name" value="Prismane-like_sf"/>
</dbReference>
<dbReference type="InterPro" id="IPR016100">
    <property type="entry name" value="Prismane_a-bundle"/>
</dbReference>
<dbReference type="NCBIfam" id="TIGR01703">
    <property type="entry name" value="hybrid_clust"/>
    <property type="match status" value="1"/>
</dbReference>
<dbReference type="NCBIfam" id="NF003658">
    <property type="entry name" value="PRK05290.1"/>
    <property type="match status" value="1"/>
</dbReference>
<dbReference type="PANTHER" id="PTHR30109">
    <property type="entry name" value="HYDROXYLAMINE REDUCTASE"/>
    <property type="match status" value="1"/>
</dbReference>
<dbReference type="PANTHER" id="PTHR30109:SF0">
    <property type="entry name" value="HYDROXYLAMINE REDUCTASE"/>
    <property type="match status" value="1"/>
</dbReference>
<dbReference type="Pfam" id="PF03063">
    <property type="entry name" value="Prismane"/>
    <property type="match status" value="1"/>
</dbReference>
<dbReference type="PIRSF" id="PIRSF000076">
    <property type="entry name" value="HCP"/>
    <property type="match status" value="1"/>
</dbReference>
<dbReference type="SUPFAM" id="SSF56821">
    <property type="entry name" value="Prismane protein-like"/>
    <property type="match status" value="1"/>
</dbReference>
<name>HCP_ECOLU</name>
<sequence>MFCVQCEQTIRTPAGNGCSYAQGMCGKTAETSDLQDLLIAALQGLSAWAVKAREYGIINHDVDSFAPRAFFSTLTNVNFDSPRIVGYAREAIALREALKAQCLAVDANARVDNPMADLQLVSDDLGELQRQAAEFTPNKDKAAIGENILGLRLLCLYGLKGAAAYMEHAHVLGQYDNDIYAQYHKIMAWLGTWPADMNALLECSMEIGQMNFKVMSILDAGETGKYGHPTPTQVNVKATAGKCILISGHDLKDLYNLLEQTEGTGVNVYTHGEMLPAHGYPELRKFKHLVGNYGSGWQNQQVEFARFPGPIVMTSNCIIDPTVGAYDDRIWTRSIVGWPGVRHLDGEDFSAVIAQAQQMAGFPYSEIPHLITVGFGRQTLLGAADTLIDLVSREKLRHIFLLGGCDGARGERHYFTDFATSVPDDCLILTLACGKYRFNKLEFGDIEGLPRLVDAGQCNDAYSAIILAVTLAEKLGCGVNDLPLSLVLSWFEQKAIVILLTLLSLGVKNIVTGPTAPGFLTPDLLAVLNEKFGLRSITTVEEDMKQLLSA</sequence>
<accession>B7NAM4</accession>
<evidence type="ECO:0000255" key="1">
    <source>
        <dbReference type="HAMAP-Rule" id="MF_00069"/>
    </source>
</evidence>
<feature type="chain" id="PRO_1000192557" description="Hydroxylamine reductase">
    <location>
        <begin position="1"/>
        <end position="550"/>
    </location>
</feature>
<feature type="binding site" evidence="1">
    <location>
        <position position="3"/>
    </location>
    <ligand>
        <name>[2Fe-2S] cluster</name>
        <dbReference type="ChEBI" id="CHEBI:190135"/>
    </ligand>
</feature>
<feature type="binding site" evidence="1">
    <location>
        <position position="6"/>
    </location>
    <ligand>
        <name>[2Fe-2S] cluster</name>
        <dbReference type="ChEBI" id="CHEBI:190135"/>
    </ligand>
</feature>
<feature type="binding site" evidence="1">
    <location>
        <position position="18"/>
    </location>
    <ligand>
        <name>[2Fe-2S] cluster</name>
        <dbReference type="ChEBI" id="CHEBI:190135"/>
    </ligand>
</feature>
<feature type="binding site" evidence="1">
    <location>
        <position position="25"/>
    </location>
    <ligand>
        <name>[2Fe-2S] cluster</name>
        <dbReference type="ChEBI" id="CHEBI:190135"/>
    </ligand>
</feature>
<feature type="binding site" evidence="1">
    <location>
        <position position="249"/>
    </location>
    <ligand>
        <name>hybrid [4Fe-2O-2S] cluster</name>
        <dbReference type="ChEBI" id="CHEBI:60519"/>
    </ligand>
</feature>
<feature type="binding site" evidence="1">
    <location>
        <position position="273"/>
    </location>
    <ligand>
        <name>hybrid [4Fe-2O-2S] cluster</name>
        <dbReference type="ChEBI" id="CHEBI:60519"/>
    </ligand>
</feature>
<feature type="binding site" evidence="1">
    <location>
        <position position="317"/>
    </location>
    <ligand>
        <name>hybrid [4Fe-2O-2S] cluster</name>
        <dbReference type="ChEBI" id="CHEBI:60519"/>
    </ligand>
</feature>
<feature type="binding site" description="via persulfide group" evidence="1">
    <location>
        <position position="405"/>
    </location>
    <ligand>
        <name>hybrid [4Fe-2O-2S] cluster</name>
        <dbReference type="ChEBI" id="CHEBI:60519"/>
    </ligand>
</feature>
<feature type="binding site" evidence="1">
    <location>
        <position position="433"/>
    </location>
    <ligand>
        <name>hybrid [4Fe-2O-2S] cluster</name>
        <dbReference type="ChEBI" id="CHEBI:60519"/>
    </ligand>
</feature>
<feature type="binding site" evidence="1">
    <location>
        <position position="458"/>
    </location>
    <ligand>
        <name>hybrid [4Fe-2O-2S] cluster</name>
        <dbReference type="ChEBI" id="CHEBI:60519"/>
    </ligand>
</feature>
<feature type="binding site" evidence="1">
    <location>
        <position position="492"/>
    </location>
    <ligand>
        <name>hybrid [4Fe-2O-2S] cluster</name>
        <dbReference type="ChEBI" id="CHEBI:60519"/>
    </ligand>
</feature>
<feature type="binding site" evidence="1">
    <location>
        <position position="494"/>
    </location>
    <ligand>
        <name>hybrid [4Fe-2O-2S] cluster</name>
        <dbReference type="ChEBI" id="CHEBI:60519"/>
    </ligand>
</feature>
<feature type="modified residue" description="Cysteine persulfide" evidence="1">
    <location>
        <position position="405"/>
    </location>
</feature>
<gene>
    <name evidence="1" type="primary">hcp</name>
    <name type="ordered locus">ECUMN_1068</name>
</gene>
<comment type="function">
    <text evidence="1">Catalyzes the reduction of hydroxylamine to form NH(3) and H(2)O.</text>
</comment>
<comment type="catalytic activity">
    <reaction evidence="1">
        <text>A + NH4(+) + H2O = hydroxylamine + AH2 + H(+)</text>
        <dbReference type="Rhea" id="RHEA:22052"/>
        <dbReference type="ChEBI" id="CHEBI:13193"/>
        <dbReference type="ChEBI" id="CHEBI:15377"/>
        <dbReference type="ChEBI" id="CHEBI:15378"/>
        <dbReference type="ChEBI" id="CHEBI:15429"/>
        <dbReference type="ChEBI" id="CHEBI:17499"/>
        <dbReference type="ChEBI" id="CHEBI:28938"/>
        <dbReference type="EC" id="1.7.99.1"/>
    </reaction>
</comment>
<comment type="cofactor">
    <cofactor evidence="1">
        <name>[2Fe-2S] cluster</name>
        <dbReference type="ChEBI" id="CHEBI:190135"/>
    </cofactor>
    <text evidence="1">Binds 1 [2Fe-2S] cluster.</text>
</comment>
<comment type="cofactor">
    <cofactor evidence="1">
        <name>hybrid [4Fe-2O-2S] cluster</name>
        <dbReference type="ChEBI" id="CHEBI:60519"/>
    </cofactor>
    <text evidence="1">Binds 1 hybrid [4Fe-2O-2S] cluster.</text>
</comment>
<comment type="subcellular location">
    <subcellularLocation>
        <location evidence="1">Cytoplasm</location>
    </subcellularLocation>
</comment>
<comment type="similarity">
    <text evidence="1">Belongs to the HCP family.</text>
</comment>
<protein>
    <recommendedName>
        <fullName evidence="1">Hydroxylamine reductase</fullName>
        <ecNumber evidence="1">1.7.99.1</ecNumber>
    </recommendedName>
    <alternativeName>
        <fullName evidence="1">Hybrid-cluster protein</fullName>
        <shortName evidence="1">HCP</shortName>
    </alternativeName>
    <alternativeName>
        <fullName evidence="1">Prismane protein</fullName>
    </alternativeName>
</protein>